<name>STA_BACSU</name>
<keyword id="KW-0012">Acyltransferase</keyword>
<keyword id="KW-0046">Antibiotic resistance</keyword>
<keyword id="KW-1185">Reference proteome</keyword>
<keyword id="KW-0808">Transferase</keyword>
<evidence type="ECO:0000255" key="1">
    <source>
        <dbReference type="PROSITE-ProRule" id="PRU00532"/>
    </source>
</evidence>
<evidence type="ECO:0000269" key="2">
    <source>
    </source>
</evidence>
<evidence type="ECO:0000303" key="3">
    <source>
    </source>
</evidence>
<evidence type="ECO:0000305" key="4"/>
<comment type="function">
    <text evidence="2">Involved in resistance to streptothricin, a broad-spectrum antibiotic produced by streptomycetes. Detoxifies streptothricin via acetylation of the beta amino group of the first beta-lysyl moiety of streptothricin.</text>
</comment>
<comment type="catalytic activity">
    <reaction evidence="2">
        <text>streptothricin D + acetyl-CoA = N(beta)-acetylstreptothricin D + CoA + H(+)</text>
        <dbReference type="Rhea" id="RHEA:57004"/>
        <dbReference type="ChEBI" id="CHEBI:15378"/>
        <dbReference type="ChEBI" id="CHEBI:57287"/>
        <dbReference type="ChEBI" id="CHEBI:57288"/>
        <dbReference type="ChEBI" id="CHEBI:60829"/>
        <dbReference type="ChEBI" id="CHEBI:141396"/>
    </reaction>
</comment>
<comment type="catalytic activity">
    <reaction evidence="2">
        <text>streptothricin F + acetyl-CoA = N(beta)-acetylstreptothricin F + CoA + H(+)</text>
        <dbReference type="Rhea" id="RHEA:57000"/>
        <dbReference type="ChEBI" id="CHEBI:15378"/>
        <dbReference type="ChEBI" id="CHEBI:57287"/>
        <dbReference type="ChEBI" id="CHEBI:57288"/>
        <dbReference type="ChEBI" id="CHEBI:60822"/>
        <dbReference type="ChEBI" id="CHEBI:141394"/>
    </reaction>
</comment>
<comment type="biophysicochemical properties">
    <kinetics>
        <KM evidence="2">1 uM for streptothricin</KM>
        <KM evidence="2">107 uM for acetyl-CoA</KM>
    </kinetics>
</comment>
<comment type="subunit">
    <text evidence="2">Homodimer.</text>
</comment>
<comment type="disruption phenotype">
    <text evidence="2">Deletion mutant is susceptible to streptothricin.</text>
</comment>
<comment type="similarity">
    <text evidence="4">Belongs to the acetyltransferase family. GNAT subfamily.</text>
</comment>
<protein>
    <recommendedName>
        <fullName evidence="3">Streptothricin acetyltransferase A</fullName>
        <ecNumber evidence="2">2.3.-.-</ecNumber>
    </recommendedName>
</protein>
<reference key="1">
    <citation type="journal article" date="1994" name="DNA Res.">
        <title>Systematic sequencing of the 180 kilobase region of the Bacillus subtilis chromosome containing the replication origin.</title>
        <authorList>
            <person name="Ogasawara N."/>
            <person name="Nakai S."/>
            <person name="Yoshikawa H."/>
        </authorList>
    </citation>
    <scope>NUCLEOTIDE SEQUENCE [GENOMIC DNA]</scope>
    <source>
        <strain>168</strain>
    </source>
</reference>
<reference key="2">
    <citation type="journal article" date="1997" name="Nature">
        <title>The complete genome sequence of the Gram-positive bacterium Bacillus subtilis.</title>
        <authorList>
            <person name="Kunst F."/>
            <person name="Ogasawara N."/>
            <person name="Moszer I."/>
            <person name="Albertini A.M."/>
            <person name="Alloni G."/>
            <person name="Azevedo V."/>
            <person name="Bertero M.G."/>
            <person name="Bessieres P."/>
            <person name="Bolotin A."/>
            <person name="Borchert S."/>
            <person name="Borriss R."/>
            <person name="Boursier L."/>
            <person name="Brans A."/>
            <person name="Braun M."/>
            <person name="Brignell S.C."/>
            <person name="Bron S."/>
            <person name="Brouillet S."/>
            <person name="Bruschi C.V."/>
            <person name="Caldwell B."/>
            <person name="Capuano V."/>
            <person name="Carter N.M."/>
            <person name="Choi S.-K."/>
            <person name="Codani J.-J."/>
            <person name="Connerton I.F."/>
            <person name="Cummings N.J."/>
            <person name="Daniel R.A."/>
            <person name="Denizot F."/>
            <person name="Devine K.M."/>
            <person name="Duesterhoeft A."/>
            <person name="Ehrlich S.D."/>
            <person name="Emmerson P.T."/>
            <person name="Entian K.-D."/>
            <person name="Errington J."/>
            <person name="Fabret C."/>
            <person name="Ferrari E."/>
            <person name="Foulger D."/>
            <person name="Fritz C."/>
            <person name="Fujita M."/>
            <person name="Fujita Y."/>
            <person name="Fuma S."/>
            <person name="Galizzi A."/>
            <person name="Galleron N."/>
            <person name="Ghim S.-Y."/>
            <person name="Glaser P."/>
            <person name="Goffeau A."/>
            <person name="Golightly E.J."/>
            <person name="Grandi G."/>
            <person name="Guiseppi G."/>
            <person name="Guy B.J."/>
            <person name="Haga K."/>
            <person name="Haiech J."/>
            <person name="Harwood C.R."/>
            <person name="Henaut A."/>
            <person name="Hilbert H."/>
            <person name="Holsappel S."/>
            <person name="Hosono S."/>
            <person name="Hullo M.-F."/>
            <person name="Itaya M."/>
            <person name="Jones L.-M."/>
            <person name="Joris B."/>
            <person name="Karamata D."/>
            <person name="Kasahara Y."/>
            <person name="Klaerr-Blanchard M."/>
            <person name="Klein C."/>
            <person name="Kobayashi Y."/>
            <person name="Koetter P."/>
            <person name="Koningstein G."/>
            <person name="Krogh S."/>
            <person name="Kumano M."/>
            <person name="Kurita K."/>
            <person name="Lapidus A."/>
            <person name="Lardinois S."/>
            <person name="Lauber J."/>
            <person name="Lazarevic V."/>
            <person name="Lee S.-M."/>
            <person name="Levine A."/>
            <person name="Liu H."/>
            <person name="Masuda S."/>
            <person name="Mauel C."/>
            <person name="Medigue C."/>
            <person name="Medina N."/>
            <person name="Mellado R.P."/>
            <person name="Mizuno M."/>
            <person name="Moestl D."/>
            <person name="Nakai S."/>
            <person name="Noback M."/>
            <person name="Noone D."/>
            <person name="O'Reilly M."/>
            <person name="Ogawa K."/>
            <person name="Ogiwara A."/>
            <person name="Oudega B."/>
            <person name="Park S.-H."/>
            <person name="Parro V."/>
            <person name="Pohl T.M."/>
            <person name="Portetelle D."/>
            <person name="Porwollik S."/>
            <person name="Prescott A.M."/>
            <person name="Presecan E."/>
            <person name="Pujic P."/>
            <person name="Purnelle B."/>
            <person name="Rapoport G."/>
            <person name="Rey M."/>
            <person name="Reynolds S."/>
            <person name="Rieger M."/>
            <person name="Rivolta C."/>
            <person name="Rocha E."/>
            <person name="Roche B."/>
            <person name="Rose M."/>
            <person name="Sadaie Y."/>
            <person name="Sato T."/>
            <person name="Scanlan E."/>
            <person name="Schleich S."/>
            <person name="Schroeter R."/>
            <person name="Scoffone F."/>
            <person name="Sekiguchi J."/>
            <person name="Sekowska A."/>
            <person name="Seror S.J."/>
            <person name="Serror P."/>
            <person name="Shin B.-S."/>
            <person name="Soldo B."/>
            <person name="Sorokin A."/>
            <person name="Tacconi E."/>
            <person name="Takagi T."/>
            <person name="Takahashi H."/>
            <person name="Takemaru K."/>
            <person name="Takeuchi M."/>
            <person name="Tamakoshi A."/>
            <person name="Tanaka T."/>
            <person name="Terpstra P."/>
            <person name="Tognoni A."/>
            <person name="Tosato V."/>
            <person name="Uchiyama S."/>
            <person name="Vandenbol M."/>
            <person name="Vannier F."/>
            <person name="Vassarotti A."/>
            <person name="Viari A."/>
            <person name="Wambutt R."/>
            <person name="Wedler E."/>
            <person name="Wedler H."/>
            <person name="Weitzenegger T."/>
            <person name="Winters P."/>
            <person name="Wipat A."/>
            <person name="Yamamoto H."/>
            <person name="Yamane K."/>
            <person name="Yasumoto K."/>
            <person name="Yata K."/>
            <person name="Yoshida K."/>
            <person name="Yoshikawa H.-F."/>
            <person name="Zumstein E."/>
            <person name="Yoshikawa H."/>
            <person name="Danchin A."/>
        </authorList>
    </citation>
    <scope>NUCLEOTIDE SEQUENCE [LARGE SCALE GENOMIC DNA]</scope>
    <source>
        <strain>168</strain>
    </source>
</reference>
<reference key="3">
    <citation type="journal article" date="2017" name="Appl. Environ. Microbiol.">
        <title>In Bacillus subtilis, the SatA (formerly YyaR) acetyltransferase detoxifies streptothricin via lysine acetylation.</title>
        <authorList>
            <person name="Burckhardt R.M."/>
            <person name="Escalante-Semerena J.C."/>
        </authorList>
    </citation>
    <scope>FUNCTION</scope>
    <scope>CATALYTIC ACTIVITY</scope>
    <scope>BIOPHYSICOCHEMICAL PROPERTIES</scope>
    <scope>SUBUNIT</scope>
    <scope>DISRUPTION PHENOTYPE</scope>
    <source>
        <strain>168</strain>
    </source>
</reference>
<proteinExistence type="evidence at protein level"/>
<gene>
    <name evidence="3" type="primary">satA</name>
    <name type="synonym">yyaR</name>
    <name type="ordered locus">BSU40740</name>
</gene>
<sequence>MIMKMTHLNMKDFNKPNEPFVVFGRMIPAFENGVWTYTEERFSKPYFKQYEDDDMDVSYVEEEGKAAFLYYLENNCIGRIKIRSNWNGYALIEDIAVAKDYRKKGVGTALLHKAIEWAKENHFCGLMLETQDINISACHFYAKHHFIIGAVDTMLYSNFPTANEIAIFWYYKF</sequence>
<organism>
    <name type="scientific">Bacillus subtilis (strain 168)</name>
    <dbReference type="NCBI Taxonomy" id="224308"/>
    <lineage>
        <taxon>Bacteria</taxon>
        <taxon>Bacillati</taxon>
        <taxon>Bacillota</taxon>
        <taxon>Bacilli</taxon>
        <taxon>Bacillales</taxon>
        <taxon>Bacillaceae</taxon>
        <taxon>Bacillus</taxon>
    </lineage>
</organism>
<feature type="chain" id="PRO_0000050058" description="Streptothricin acetyltransferase A">
    <location>
        <begin position="1"/>
        <end position="173"/>
    </location>
</feature>
<feature type="domain" description="N-acetyltransferase" evidence="1">
    <location>
        <begin position="21"/>
        <end position="173"/>
    </location>
</feature>
<dbReference type="EC" id="2.3.-.-" evidence="2"/>
<dbReference type="EMBL" id="D26185">
    <property type="protein sequence ID" value="BAA05205.1"/>
    <property type="molecule type" value="Genomic_DNA"/>
</dbReference>
<dbReference type="EMBL" id="AL009126">
    <property type="protein sequence ID" value="CAB16111.1"/>
    <property type="molecule type" value="Genomic_DNA"/>
</dbReference>
<dbReference type="PIR" id="S65999">
    <property type="entry name" value="S65999"/>
</dbReference>
<dbReference type="RefSeq" id="NP_391954.1">
    <property type="nucleotide sequence ID" value="NC_000964.3"/>
</dbReference>
<dbReference type="RefSeq" id="WP_003242546.1">
    <property type="nucleotide sequence ID" value="NZ_OZ025638.1"/>
</dbReference>
<dbReference type="SMR" id="P37506"/>
<dbReference type="FunCoup" id="P37506">
    <property type="interactions" value="22"/>
</dbReference>
<dbReference type="STRING" id="224308.BSU40740"/>
<dbReference type="PaxDb" id="224308-BSU40740"/>
<dbReference type="EnsemblBacteria" id="CAB16111">
    <property type="protein sequence ID" value="CAB16111"/>
    <property type="gene ID" value="BSU_40740"/>
</dbReference>
<dbReference type="GeneID" id="937878"/>
<dbReference type="KEGG" id="bsu:BSU40740"/>
<dbReference type="PATRIC" id="fig|224308.179.peg.4416"/>
<dbReference type="eggNOG" id="COG0456">
    <property type="taxonomic scope" value="Bacteria"/>
</dbReference>
<dbReference type="InParanoid" id="P37506"/>
<dbReference type="OrthoDB" id="9800193at2"/>
<dbReference type="PhylomeDB" id="P37506"/>
<dbReference type="BioCyc" id="BSUB:BSU40740-MONOMER"/>
<dbReference type="Proteomes" id="UP000001570">
    <property type="component" value="Chromosome"/>
</dbReference>
<dbReference type="GO" id="GO:0016747">
    <property type="term" value="F:acyltransferase activity, transferring groups other than amino-acyl groups"/>
    <property type="evidence" value="ECO:0000318"/>
    <property type="project" value="GO_Central"/>
</dbReference>
<dbReference type="GO" id="GO:0046677">
    <property type="term" value="P:response to antibiotic"/>
    <property type="evidence" value="ECO:0007669"/>
    <property type="project" value="UniProtKB-KW"/>
</dbReference>
<dbReference type="CDD" id="cd04301">
    <property type="entry name" value="NAT_SF"/>
    <property type="match status" value="1"/>
</dbReference>
<dbReference type="Gene3D" id="3.40.630.30">
    <property type="match status" value="1"/>
</dbReference>
<dbReference type="InterPro" id="IPR016181">
    <property type="entry name" value="Acyl_CoA_acyltransferase"/>
</dbReference>
<dbReference type="InterPro" id="IPR000182">
    <property type="entry name" value="GNAT_dom"/>
</dbReference>
<dbReference type="InterPro" id="IPR008125">
    <property type="entry name" value="Streptothricin_AcTrfase"/>
</dbReference>
<dbReference type="InterPro" id="IPR050680">
    <property type="entry name" value="YpeA/RimI_acetyltransf"/>
</dbReference>
<dbReference type="PANTHER" id="PTHR43420">
    <property type="entry name" value="ACETYLTRANSFERASE"/>
    <property type="match status" value="1"/>
</dbReference>
<dbReference type="Pfam" id="PF00583">
    <property type="entry name" value="Acetyltransf_1"/>
    <property type="match status" value="1"/>
</dbReference>
<dbReference type="PRINTS" id="PR01754">
    <property type="entry name" value="SACTRNSFRASE"/>
</dbReference>
<dbReference type="SUPFAM" id="SSF55729">
    <property type="entry name" value="Acyl-CoA N-acyltransferases (Nat)"/>
    <property type="match status" value="1"/>
</dbReference>
<dbReference type="PROSITE" id="PS51186">
    <property type="entry name" value="GNAT"/>
    <property type="match status" value="1"/>
</dbReference>
<accession>P37506</accession>